<dbReference type="PDB" id="7ZRU">
    <property type="method" value="NMR"/>
    <property type="chains" value="A=1-28"/>
</dbReference>
<dbReference type="PDBsum" id="7ZRU"/>
<dbReference type="SMR" id="C0HKB3"/>
<dbReference type="GO" id="GO:0005576">
    <property type="term" value="C:extracellular region"/>
    <property type="evidence" value="ECO:0000314"/>
    <property type="project" value="UniProtKB"/>
</dbReference>
<dbReference type="GO" id="GO:0015459">
    <property type="term" value="F:potassium channel regulator activity"/>
    <property type="evidence" value="ECO:0007669"/>
    <property type="project" value="UniProtKB-KW"/>
</dbReference>
<dbReference type="GO" id="GO:0090729">
    <property type="term" value="F:toxin activity"/>
    <property type="evidence" value="ECO:0007669"/>
    <property type="project" value="UniProtKB-KW"/>
</dbReference>
<dbReference type="GO" id="GO:1903817">
    <property type="term" value="P:negative regulation of voltage-gated potassium channel activity"/>
    <property type="evidence" value="ECO:0000314"/>
    <property type="project" value="UniProtKB"/>
</dbReference>
<comment type="function">
    <text evidence="1">Reversibly blocks voltage-gated potassium channels Kv1.2/KCNA2 and Kv1.3/KCNA3.</text>
</comment>
<comment type="subcellular location">
    <subcellularLocation>
        <location evidence="1">Secreted</location>
    </subcellularLocation>
</comment>
<comment type="tissue specificity">
    <text evidence="4">Expressed by the venom gland.</text>
</comment>
<comment type="PTM">
    <text evidence="1">Contains 2 disulfide bonds.</text>
</comment>
<comment type="mass spectrometry"/>
<comment type="miscellaneous">
    <text evidence="1">Negative results: does not inhibit voltage-gated potassium channels Shaker B, Shab, Kv1.1/KCNA1 and Kv1.4/KCNA4.</text>
</comment>
<comment type="similarity">
    <text evidence="3">Belongs to the short scorpion toxin superfamily. Potassium channel inhibitor family. Gamma-KTx 2 subfamily.</text>
</comment>
<accession>C0HKB3</accession>
<protein>
    <recommendedName>
        <fullName evidence="2">Potassium channel toxin kappa-KTx 2.9</fullName>
    </recommendedName>
    <alternativeName>
        <fullName evidence="2">Potassium channel-blocking toxin 6</fullName>
        <shortName evidence="2">Pi6</shortName>
    </alternativeName>
</protein>
<reference evidence="3" key="1">
    <citation type="journal article" date="2017" name="Toxicon">
        <title>Pi5 and Pi6, two undescribed peptides from the venom of the scorpion Pandinus imperator and their effects on K(+)-channels.</title>
        <authorList>
            <person name="Olamendi-Portugal T."/>
            <person name="Csoti A."/>
            <person name="Jimenez-Vargas J.M."/>
            <person name="Gomez-Lagunas F."/>
            <person name="Panyi G."/>
            <person name="Possani L.D."/>
        </authorList>
    </citation>
    <scope>PROTEIN SEQUENCE</scope>
    <scope>FUNCTION</scope>
    <scope>SUBCELLULAR LOCATION</scope>
    <scope>PRESENCE OF DISULFIDE BONDS</scope>
    <scope>MASS SPECTROMETRY</scope>
    <scope>IDENTIFICATION BY MASS SPECTROMETRY</scope>
    <source>
        <tissue evidence="2">Venom</tissue>
    </source>
</reference>
<proteinExistence type="evidence at protein level"/>
<evidence type="ECO:0000269" key="1">
    <source>
    </source>
</evidence>
<evidence type="ECO:0000303" key="2">
    <source>
    </source>
</evidence>
<evidence type="ECO:0000305" key="3"/>
<evidence type="ECO:0000305" key="4">
    <source>
    </source>
</evidence>
<evidence type="ECO:0007744" key="5">
    <source>
        <dbReference type="PDB" id="7ZRU"/>
    </source>
</evidence>
<evidence type="ECO:0007829" key="6">
    <source>
        <dbReference type="PDB" id="7ZRU"/>
    </source>
</evidence>
<name>KKX29_PANIM</name>
<keyword id="KW-0002">3D-structure</keyword>
<keyword id="KW-0903">Direct protein sequencing</keyword>
<keyword id="KW-1015">Disulfide bond</keyword>
<keyword id="KW-0872">Ion channel impairing toxin</keyword>
<keyword id="KW-0632">Potassium channel impairing toxin</keyword>
<keyword id="KW-0964">Secreted</keyword>
<keyword id="KW-0800">Toxin</keyword>
<keyword id="KW-1220">Voltage-gated potassium channel impairing toxin</keyword>
<feature type="peptide" id="PRO_0000444166" description="Potassium channel toxin kappa-KTx 2.9" evidence="1">
    <location>
        <begin position="1"/>
        <end position="28"/>
    </location>
</feature>
<feature type="disulfide bond" evidence="5">
    <location>
        <begin position="4"/>
        <end position="22"/>
    </location>
</feature>
<feature type="disulfide bond" evidence="5">
    <location>
        <begin position="8"/>
        <end position="18"/>
    </location>
</feature>
<feature type="helix" evidence="6">
    <location>
        <begin position="3"/>
        <end position="8"/>
    </location>
</feature>
<feature type="turn" evidence="6">
    <location>
        <begin position="9"/>
        <end position="11"/>
    </location>
</feature>
<feature type="helix" evidence="6">
    <location>
        <begin position="15"/>
        <end position="21"/>
    </location>
</feature>
<organism evidence="2">
    <name type="scientific">Pandinus imperator</name>
    <name type="common">Emperor scorpion</name>
    <dbReference type="NCBI Taxonomy" id="55084"/>
    <lineage>
        <taxon>Eukaryota</taxon>
        <taxon>Metazoa</taxon>
        <taxon>Ecdysozoa</taxon>
        <taxon>Arthropoda</taxon>
        <taxon>Chelicerata</taxon>
        <taxon>Arachnida</taxon>
        <taxon>Scorpiones</taxon>
        <taxon>Iurida</taxon>
        <taxon>Scorpionoidea</taxon>
        <taxon>Scorpionidae</taxon>
        <taxon>Pandininae</taxon>
        <taxon>Pandinus</taxon>
    </lineage>
</organism>
<sequence>VDACYEACMHHHMNSDDCIEACKNPVPP</sequence>